<accession>Q089Q3</accession>
<comment type="function">
    <text evidence="1">One of the primary rRNA binding proteins, this protein initially binds near the 5'-end of the 23S rRNA. It is important during the early stages of 50S assembly. It makes multiple contacts with different domains of the 23S rRNA in the assembled 50S subunit and ribosome.</text>
</comment>
<comment type="function">
    <text evidence="1">Forms part of the polypeptide exit tunnel.</text>
</comment>
<comment type="subunit">
    <text evidence="1">Part of the 50S ribosomal subunit.</text>
</comment>
<comment type="similarity">
    <text evidence="1">Belongs to the universal ribosomal protein uL4 family.</text>
</comment>
<gene>
    <name evidence="1" type="primary">rplD</name>
    <name type="ordered locus">Sfri_0149</name>
</gene>
<feature type="chain" id="PRO_1000052494" description="Large ribosomal subunit protein uL4">
    <location>
        <begin position="1"/>
        <end position="201"/>
    </location>
</feature>
<feature type="region of interest" description="Disordered" evidence="2">
    <location>
        <begin position="45"/>
        <end position="72"/>
    </location>
</feature>
<sequence length="201" mass="22013">MELVLKDAQSALEVSETTFGRDFNEALVHQVVVAYAANARQGTRAQKTRAEVTGSGKKPWRQKGTGRARAGSVKGPIWRGGGVTFAAKTQDHSQKVNKKMYRGALKSIFSELVRQERLVVVESFGVEAPKTKELKAKLKAMNLEDVLIVTAEVDENLFLAARNLYKVDVRDVAGLDPVSLIAFNTVLVTADAVKQIEEMLA</sequence>
<keyword id="KW-1185">Reference proteome</keyword>
<keyword id="KW-0687">Ribonucleoprotein</keyword>
<keyword id="KW-0689">Ribosomal protein</keyword>
<keyword id="KW-0694">RNA-binding</keyword>
<keyword id="KW-0699">rRNA-binding</keyword>
<proteinExistence type="inferred from homology"/>
<reference key="1">
    <citation type="submission" date="2006-08" db="EMBL/GenBank/DDBJ databases">
        <title>Complete sequence of Shewanella frigidimarina NCIMB 400.</title>
        <authorList>
            <consortium name="US DOE Joint Genome Institute"/>
            <person name="Copeland A."/>
            <person name="Lucas S."/>
            <person name="Lapidus A."/>
            <person name="Barry K."/>
            <person name="Detter J.C."/>
            <person name="Glavina del Rio T."/>
            <person name="Hammon N."/>
            <person name="Israni S."/>
            <person name="Dalin E."/>
            <person name="Tice H."/>
            <person name="Pitluck S."/>
            <person name="Fredrickson J.K."/>
            <person name="Kolker E."/>
            <person name="McCuel L.A."/>
            <person name="DiChristina T."/>
            <person name="Nealson K.H."/>
            <person name="Newman D."/>
            <person name="Tiedje J.M."/>
            <person name="Zhou J."/>
            <person name="Romine M.F."/>
            <person name="Culley D.E."/>
            <person name="Serres M."/>
            <person name="Chertkov O."/>
            <person name="Brettin T."/>
            <person name="Bruce D."/>
            <person name="Han C."/>
            <person name="Tapia R."/>
            <person name="Gilna P."/>
            <person name="Schmutz J."/>
            <person name="Larimer F."/>
            <person name="Land M."/>
            <person name="Hauser L."/>
            <person name="Kyrpides N."/>
            <person name="Mikhailova N."/>
            <person name="Richardson P."/>
        </authorList>
    </citation>
    <scope>NUCLEOTIDE SEQUENCE [LARGE SCALE GENOMIC DNA]</scope>
    <source>
        <strain>NCIMB 400</strain>
    </source>
</reference>
<dbReference type="EMBL" id="CP000447">
    <property type="protein sequence ID" value="ABI70012.1"/>
    <property type="molecule type" value="Genomic_DNA"/>
</dbReference>
<dbReference type="RefSeq" id="WP_011635641.1">
    <property type="nucleotide sequence ID" value="NC_008345.1"/>
</dbReference>
<dbReference type="SMR" id="Q089Q3"/>
<dbReference type="STRING" id="318167.Sfri_0149"/>
<dbReference type="GeneID" id="90572206"/>
<dbReference type="KEGG" id="sfr:Sfri_0149"/>
<dbReference type="eggNOG" id="COG0088">
    <property type="taxonomic scope" value="Bacteria"/>
</dbReference>
<dbReference type="HOGENOM" id="CLU_041575_5_2_6"/>
<dbReference type="OrthoDB" id="9803201at2"/>
<dbReference type="Proteomes" id="UP000000684">
    <property type="component" value="Chromosome"/>
</dbReference>
<dbReference type="GO" id="GO:1990904">
    <property type="term" value="C:ribonucleoprotein complex"/>
    <property type="evidence" value="ECO:0007669"/>
    <property type="project" value="UniProtKB-KW"/>
</dbReference>
<dbReference type="GO" id="GO:0005840">
    <property type="term" value="C:ribosome"/>
    <property type="evidence" value="ECO:0007669"/>
    <property type="project" value="UniProtKB-KW"/>
</dbReference>
<dbReference type="GO" id="GO:0019843">
    <property type="term" value="F:rRNA binding"/>
    <property type="evidence" value="ECO:0007669"/>
    <property type="project" value="UniProtKB-UniRule"/>
</dbReference>
<dbReference type="GO" id="GO:0003735">
    <property type="term" value="F:structural constituent of ribosome"/>
    <property type="evidence" value="ECO:0007669"/>
    <property type="project" value="InterPro"/>
</dbReference>
<dbReference type="GO" id="GO:0006412">
    <property type="term" value="P:translation"/>
    <property type="evidence" value="ECO:0007669"/>
    <property type="project" value="UniProtKB-UniRule"/>
</dbReference>
<dbReference type="FunFam" id="3.40.1370.10:FF:000001">
    <property type="entry name" value="50S ribosomal protein L4"/>
    <property type="match status" value="1"/>
</dbReference>
<dbReference type="Gene3D" id="3.40.1370.10">
    <property type="match status" value="1"/>
</dbReference>
<dbReference type="HAMAP" id="MF_01328_B">
    <property type="entry name" value="Ribosomal_uL4_B"/>
    <property type="match status" value="1"/>
</dbReference>
<dbReference type="InterPro" id="IPR002136">
    <property type="entry name" value="Ribosomal_uL4"/>
</dbReference>
<dbReference type="InterPro" id="IPR013005">
    <property type="entry name" value="Ribosomal_uL4-like"/>
</dbReference>
<dbReference type="InterPro" id="IPR023574">
    <property type="entry name" value="Ribosomal_uL4_dom_sf"/>
</dbReference>
<dbReference type="NCBIfam" id="TIGR03953">
    <property type="entry name" value="rplD_bact"/>
    <property type="match status" value="1"/>
</dbReference>
<dbReference type="PANTHER" id="PTHR10746">
    <property type="entry name" value="50S RIBOSOMAL PROTEIN L4"/>
    <property type="match status" value="1"/>
</dbReference>
<dbReference type="PANTHER" id="PTHR10746:SF6">
    <property type="entry name" value="LARGE RIBOSOMAL SUBUNIT PROTEIN UL4M"/>
    <property type="match status" value="1"/>
</dbReference>
<dbReference type="Pfam" id="PF00573">
    <property type="entry name" value="Ribosomal_L4"/>
    <property type="match status" value="1"/>
</dbReference>
<dbReference type="SUPFAM" id="SSF52166">
    <property type="entry name" value="Ribosomal protein L4"/>
    <property type="match status" value="1"/>
</dbReference>
<protein>
    <recommendedName>
        <fullName evidence="1">Large ribosomal subunit protein uL4</fullName>
    </recommendedName>
    <alternativeName>
        <fullName evidence="3">50S ribosomal protein L4</fullName>
    </alternativeName>
</protein>
<organism>
    <name type="scientific">Shewanella frigidimarina (strain NCIMB 400)</name>
    <dbReference type="NCBI Taxonomy" id="318167"/>
    <lineage>
        <taxon>Bacteria</taxon>
        <taxon>Pseudomonadati</taxon>
        <taxon>Pseudomonadota</taxon>
        <taxon>Gammaproteobacteria</taxon>
        <taxon>Alteromonadales</taxon>
        <taxon>Shewanellaceae</taxon>
        <taxon>Shewanella</taxon>
    </lineage>
</organism>
<name>RL4_SHEFN</name>
<evidence type="ECO:0000255" key="1">
    <source>
        <dbReference type="HAMAP-Rule" id="MF_01328"/>
    </source>
</evidence>
<evidence type="ECO:0000256" key="2">
    <source>
        <dbReference type="SAM" id="MobiDB-lite"/>
    </source>
</evidence>
<evidence type="ECO:0000305" key="3"/>